<organism>
    <name type="scientific">Homo sapiens</name>
    <name type="common">Human</name>
    <dbReference type="NCBI Taxonomy" id="9606"/>
    <lineage>
        <taxon>Eukaryota</taxon>
        <taxon>Metazoa</taxon>
        <taxon>Chordata</taxon>
        <taxon>Craniata</taxon>
        <taxon>Vertebrata</taxon>
        <taxon>Euteleostomi</taxon>
        <taxon>Mammalia</taxon>
        <taxon>Eutheria</taxon>
        <taxon>Euarchontoglires</taxon>
        <taxon>Primates</taxon>
        <taxon>Haplorrhini</taxon>
        <taxon>Catarrhini</taxon>
        <taxon>Hominidae</taxon>
        <taxon>Homo</taxon>
    </lineage>
</organism>
<proteinExistence type="evidence at protein level"/>
<accession>O95873</accession>
<accession>B0UXA1</accession>
<accession>B0UZ50</accession>
<accession>Q5SSS6</accession>
<accession>Q95IG0</accession>
<feature type="chain" id="PRO_0000089504" description="Uncharacterized protein C6orf47">
    <location>
        <begin position="1"/>
        <end position="294"/>
    </location>
</feature>
<feature type="region of interest" description="Disordered" evidence="2">
    <location>
        <begin position="1"/>
        <end position="148"/>
    </location>
</feature>
<feature type="region of interest" description="Disordered" evidence="2">
    <location>
        <begin position="268"/>
        <end position="294"/>
    </location>
</feature>
<feature type="compositionally biased region" description="Low complexity" evidence="2">
    <location>
        <begin position="35"/>
        <end position="44"/>
    </location>
</feature>
<feature type="compositionally biased region" description="Basic and acidic residues" evidence="2">
    <location>
        <begin position="52"/>
        <end position="62"/>
    </location>
</feature>
<feature type="compositionally biased region" description="Basic and acidic residues" evidence="2">
    <location>
        <begin position="73"/>
        <end position="92"/>
    </location>
</feature>
<feature type="compositionally biased region" description="Basic and acidic residues" evidence="2">
    <location>
        <begin position="278"/>
        <end position="294"/>
    </location>
</feature>
<feature type="modified residue" description="Phosphoserine" evidence="1">
    <location>
        <position position="34"/>
    </location>
</feature>
<feature type="modified residue" description="Phosphoserine" evidence="1">
    <location>
        <position position="35"/>
    </location>
</feature>
<feature type="modified residue" description="Phosphoserine" evidence="8">
    <location>
        <position position="71"/>
    </location>
</feature>
<feature type="modified residue" description="Phosphoserine" evidence="8">
    <location>
        <position position="90"/>
    </location>
</feature>
<feature type="sequence variant" id="VAR_022911" description="In dbSNP:rs3130617." evidence="3 4 5 6 7">
    <original>G</original>
    <variation>R</variation>
    <location>
        <position position="68"/>
    </location>
</feature>
<feature type="sequence variant" id="VAR_056797" description="In dbSNP:rs2242655.">
    <original>K</original>
    <variation>N</variation>
    <location>
        <position position="92"/>
    </location>
</feature>
<reference key="1">
    <citation type="journal article" date="2003" name="Genome Res.">
        <title>Analysis of the gene-dense major histocompatibility complex class III region and its comparison to mouse.</title>
        <authorList>
            <person name="Xie T."/>
            <person name="Rowen L."/>
            <person name="Aguado B."/>
            <person name="Ahearn M.E."/>
            <person name="Madan A."/>
            <person name="Qin S."/>
            <person name="Campbell R.D."/>
            <person name="Hood L."/>
        </authorList>
    </citation>
    <scope>NUCLEOTIDE SEQUENCE [LARGE SCALE GENOMIC DNA]</scope>
    <scope>VARIANT ARG-68</scope>
</reference>
<reference key="2">
    <citation type="submission" date="1999-09" db="EMBL/GenBank/DDBJ databases">
        <title>Homo sapiens 2,229,817bp genomic DNA of 6p21.3 HLA class I region.</title>
        <authorList>
            <person name="Shiina S."/>
            <person name="Tamiya G."/>
            <person name="Oka A."/>
            <person name="Inoko H."/>
        </authorList>
    </citation>
    <scope>NUCLEOTIDE SEQUENCE [LARGE SCALE GENOMIC DNA]</scope>
    <scope>VARIANT ARG-68</scope>
</reference>
<reference key="3">
    <citation type="journal article" date="2003" name="Nature">
        <title>The DNA sequence and analysis of human chromosome 6.</title>
        <authorList>
            <person name="Mungall A.J."/>
            <person name="Palmer S.A."/>
            <person name="Sims S.K."/>
            <person name="Edwards C.A."/>
            <person name="Ashurst J.L."/>
            <person name="Wilming L."/>
            <person name="Jones M.C."/>
            <person name="Horton R."/>
            <person name="Hunt S.E."/>
            <person name="Scott C.E."/>
            <person name="Gilbert J.G.R."/>
            <person name="Clamp M.E."/>
            <person name="Bethel G."/>
            <person name="Milne S."/>
            <person name="Ainscough R."/>
            <person name="Almeida J.P."/>
            <person name="Ambrose K.D."/>
            <person name="Andrews T.D."/>
            <person name="Ashwell R.I.S."/>
            <person name="Babbage A.K."/>
            <person name="Bagguley C.L."/>
            <person name="Bailey J."/>
            <person name="Banerjee R."/>
            <person name="Barker D.J."/>
            <person name="Barlow K.F."/>
            <person name="Bates K."/>
            <person name="Beare D.M."/>
            <person name="Beasley H."/>
            <person name="Beasley O."/>
            <person name="Bird C.P."/>
            <person name="Blakey S.E."/>
            <person name="Bray-Allen S."/>
            <person name="Brook J."/>
            <person name="Brown A.J."/>
            <person name="Brown J.Y."/>
            <person name="Burford D.C."/>
            <person name="Burrill W."/>
            <person name="Burton J."/>
            <person name="Carder C."/>
            <person name="Carter N.P."/>
            <person name="Chapman J.C."/>
            <person name="Clark S.Y."/>
            <person name="Clark G."/>
            <person name="Clee C.M."/>
            <person name="Clegg S."/>
            <person name="Cobley V."/>
            <person name="Collier R.E."/>
            <person name="Collins J.E."/>
            <person name="Colman L.K."/>
            <person name="Corby N.R."/>
            <person name="Coville G.J."/>
            <person name="Culley K.M."/>
            <person name="Dhami P."/>
            <person name="Davies J."/>
            <person name="Dunn M."/>
            <person name="Earthrowl M.E."/>
            <person name="Ellington A.E."/>
            <person name="Evans K.A."/>
            <person name="Faulkner L."/>
            <person name="Francis M.D."/>
            <person name="Frankish A."/>
            <person name="Frankland J."/>
            <person name="French L."/>
            <person name="Garner P."/>
            <person name="Garnett J."/>
            <person name="Ghori M.J."/>
            <person name="Gilby L.M."/>
            <person name="Gillson C.J."/>
            <person name="Glithero R.J."/>
            <person name="Grafham D.V."/>
            <person name="Grant M."/>
            <person name="Gribble S."/>
            <person name="Griffiths C."/>
            <person name="Griffiths M.N.D."/>
            <person name="Hall R."/>
            <person name="Halls K.S."/>
            <person name="Hammond S."/>
            <person name="Harley J.L."/>
            <person name="Hart E.A."/>
            <person name="Heath P.D."/>
            <person name="Heathcott R."/>
            <person name="Holmes S.J."/>
            <person name="Howden P.J."/>
            <person name="Howe K.L."/>
            <person name="Howell G.R."/>
            <person name="Huckle E."/>
            <person name="Humphray S.J."/>
            <person name="Humphries M.D."/>
            <person name="Hunt A.R."/>
            <person name="Johnson C.M."/>
            <person name="Joy A.A."/>
            <person name="Kay M."/>
            <person name="Keenan S.J."/>
            <person name="Kimberley A.M."/>
            <person name="King A."/>
            <person name="Laird G.K."/>
            <person name="Langford C."/>
            <person name="Lawlor S."/>
            <person name="Leongamornlert D.A."/>
            <person name="Leversha M."/>
            <person name="Lloyd C.R."/>
            <person name="Lloyd D.M."/>
            <person name="Loveland J.E."/>
            <person name="Lovell J."/>
            <person name="Martin S."/>
            <person name="Mashreghi-Mohammadi M."/>
            <person name="Maslen G.L."/>
            <person name="Matthews L."/>
            <person name="McCann O.T."/>
            <person name="McLaren S.J."/>
            <person name="McLay K."/>
            <person name="McMurray A."/>
            <person name="Moore M.J.F."/>
            <person name="Mullikin J.C."/>
            <person name="Niblett D."/>
            <person name="Nickerson T."/>
            <person name="Novik K.L."/>
            <person name="Oliver K."/>
            <person name="Overton-Larty E.K."/>
            <person name="Parker A."/>
            <person name="Patel R."/>
            <person name="Pearce A.V."/>
            <person name="Peck A.I."/>
            <person name="Phillimore B.J.C.T."/>
            <person name="Phillips S."/>
            <person name="Plumb R.W."/>
            <person name="Porter K.M."/>
            <person name="Ramsey Y."/>
            <person name="Ranby S.A."/>
            <person name="Rice C.M."/>
            <person name="Ross M.T."/>
            <person name="Searle S.M."/>
            <person name="Sehra H.K."/>
            <person name="Sheridan E."/>
            <person name="Skuce C.D."/>
            <person name="Smith S."/>
            <person name="Smith M."/>
            <person name="Spraggon L."/>
            <person name="Squares S.L."/>
            <person name="Steward C.A."/>
            <person name="Sycamore N."/>
            <person name="Tamlyn-Hall G."/>
            <person name="Tester J."/>
            <person name="Theaker A.J."/>
            <person name="Thomas D.W."/>
            <person name="Thorpe A."/>
            <person name="Tracey A."/>
            <person name="Tromans A."/>
            <person name="Tubby B."/>
            <person name="Wall M."/>
            <person name="Wallis J.M."/>
            <person name="West A.P."/>
            <person name="White S.S."/>
            <person name="Whitehead S.L."/>
            <person name="Whittaker H."/>
            <person name="Wild A."/>
            <person name="Willey D.J."/>
            <person name="Wilmer T.E."/>
            <person name="Wood J.M."/>
            <person name="Wray P.W."/>
            <person name="Wyatt J.C."/>
            <person name="Young L."/>
            <person name="Younger R.M."/>
            <person name="Bentley D.R."/>
            <person name="Coulson A."/>
            <person name="Durbin R.M."/>
            <person name="Hubbard T."/>
            <person name="Sulston J.E."/>
            <person name="Dunham I."/>
            <person name="Rogers J."/>
            <person name="Beck S."/>
        </authorList>
    </citation>
    <scope>NUCLEOTIDE SEQUENCE [LARGE SCALE GENOMIC DNA]</scope>
    <scope>VARIANT ARG-68</scope>
</reference>
<reference key="4">
    <citation type="submission" date="2005-07" db="EMBL/GenBank/DDBJ databases">
        <authorList>
            <person name="Mural R.J."/>
            <person name="Istrail S."/>
            <person name="Sutton G.G."/>
            <person name="Florea L."/>
            <person name="Halpern A.L."/>
            <person name="Mobarry C.M."/>
            <person name="Lippert R."/>
            <person name="Walenz B."/>
            <person name="Shatkay H."/>
            <person name="Dew I."/>
            <person name="Miller J.R."/>
            <person name="Flanigan M.J."/>
            <person name="Edwards N.J."/>
            <person name="Bolanos R."/>
            <person name="Fasulo D."/>
            <person name="Halldorsson B.V."/>
            <person name="Hannenhalli S."/>
            <person name="Turner R."/>
            <person name="Yooseph S."/>
            <person name="Lu F."/>
            <person name="Nusskern D.R."/>
            <person name="Shue B.C."/>
            <person name="Zheng X.H."/>
            <person name="Zhong F."/>
            <person name="Delcher A.L."/>
            <person name="Huson D.H."/>
            <person name="Kravitz S.A."/>
            <person name="Mouchard L."/>
            <person name="Reinert K."/>
            <person name="Remington K.A."/>
            <person name="Clark A.G."/>
            <person name="Waterman M.S."/>
            <person name="Eichler E.E."/>
            <person name="Adams M.D."/>
            <person name="Hunkapiller M.W."/>
            <person name="Myers E.W."/>
            <person name="Venter J.C."/>
        </authorList>
    </citation>
    <scope>NUCLEOTIDE SEQUENCE [LARGE SCALE GENOMIC DNA]</scope>
    <scope>VARIANT ARG-68</scope>
</reference>
<reference key="5">
    <citation type="journal article" date="2004" name="Genome Res.">
        <title>The status, quality, and expansion of the NIH full-length cDNA project: the Mammalian Gene Collection (MGC).</title>
        <authorList>
            <consortium name="The MGC Project Team"/>
        </authorList>
    </citation>
    <scope>NUCLEOTIDE SEQUENCE [LARGE SCALE MRNA]</scope>
    <scope>VARIANT ARG-68</scope>
    <source>
        <tissue>Eye</tissue>
    </source>
</reference>
<reference key="6">
    <citation type="journal article" date="2013" name="J. Proteome Res.">
        <title>Toward a comprehensive characterization of a human cancer cell phosphoproteome.</title>
        <authorList>
            <person name="Zhou H."/>
            <person name="Di Palma S."/>
            <person name="Preisinger C."/>
            <person name="Peng M."/>
            <person name="Polat A.N."/>
            <person name="Heck A.J."/>
            <person name="Mohammed S."/>
        </authorList>
    </citation>
    <scope>PHOSPHORYLATION [LARGE SCALE ANALYSIS] AT SER-71 AND SER-90</scope>
    <scope>IDENTIFICATION BY MASS SPECTROMETRY [LARGE SCALE ANALYSIS]</scope>
    <source>
        <tissue>Erythroleukemia</tissue>
    </source>
</reference>
<sequence length="294" mass="31710">MFLRRLGGWLPRPWGRRKPMRPDPPYPEPRRVDSSSENSGSDWDSAPETMEDVGHPKTKDSGALRVSGAASEPSKEEPQVEQLGSKRMDSLKWDQPISSTQESGRLEAGGASPKLRWDHVDSGGTRRPGVSPEGGLSVPGPGAPLEKPGRREKLLGWLRGEPGAPSRYLGGPEECLQISTNLTLHLLELLASALLALCSRPLRAALDTLGLRGPLGLWLHGLLSFLAALHGLHAVLSLLTAHPLHFACLFGLLQALVLAVSLREPNGDEAATDWESEGLEREGEEQRGDPGKGL</sequence>
<evidence type="ECO:0000250" key="1">
    <source>
        <dbReference type="UniProtKB" id="Q6MG51"/>
    </source>
</evidence>
<evidence type="ECO:0000256" key="2">
    <source>
        <dbReference type="SAM" id="MobiDB-lite"/>
    </source>
</evidence>
<evidence type="ECO:0000269" key="3">
    <source>
    </source>
</evidence>
<evidence type="ECO:0000269" key="4">
    <source>
    </source>
</evidence>
<evidence type="ECO:0000269" key="5">
    <source>
    </source>
</evidence>
<evidence type="ECO:0000269" key="6">
    <source ref="2"/>
</evidence>
<evidence type="ECO:0000269" key="7">
    <source ref="4"/>
</evidence>
<evidence type="ECO:0007744" key="8">
    <source>
    </source>
</evidence>
<dbReference type="EMBL" id="AF129756">
    <property type="protein sequence ID" value="AAD18083.1"/>
    <property type="molecule type" value="Genomic_DNA"/>
</dbReference>
<dbReference type="EMBL" id="BA000025">
    <property type="protein sequence ID" value="BAB63388.1"/>
    <property type="molecule type" value="Genomic_DNA"/>
</dbReference>
<dbReference type="EMBL" id="AL662801">
    <property type="status" value="NOT_ANNOTATED_CDS"/>
    <property type="molecule type" value="Genomic_DNA"/>
</dbReference>
<dbReference type="EMBL" id="AL662899">
    <property type="status" value="NOT_ANNOTATED_CDS"/>
    <property type="molecule type" value="Genomic_DNA"/>
</dbReference>
<dbReference type="EMBL" id="AL670886">
    <property type="status" value="NOT_ANNOTATED_CDS"/>
    <property type="molecule type" value="Genomic_DNA"/>
</dbReference>
<dbReference type="EMBL" id="AL805934">
    <property type="status" value="NOT_ANNOTATED_CDS"/>
    <property type="molecule type" value="Genomic_DNA"/>
</dbReference>
<dbReference type="EMBL" id="BX511262">
    <property type="status" value="NOT_ANNOTATED_CDS"/>
    <property type="molecule type" value="Genomic_DNA"/>
</dbReference>
<dbReference type="EMBL" id="CR753842">
    <property type="status" value="NOT_ANNOTATED_CDS"/>
    <property type="molecule type" value="Genomic_DNA"/>
</dbReference>
<dbReference type="EMBL" id="CR354443">
    <property type="status" value="NOT_ANNOTATED_CDS"/>
    <property type="molecule type" value="Genomic_DNA"/>
</dbReference>
<dbReference type="EMBL" id="CR759761">
    <property type="status" value="NOT_ANNOTATED_CDS"/>
    <property type="molecule type" value="Genomic_DNA"/>
</dbReference>
<dbReference type="EMBL" id="CH471081">
    <property type="protein sequence ID" value="EAX03465.1"/>
    <property type="molecule type" value="Genomic_DNA"/>
</dbReference>
<dbReference type="EMBL" id="BC012950">
    <property type="protein sequence ID" value="AAH12950.1"/>
    <property type="molecule type" value="mRNA"/>
</dbReference>
<dbReference type="CCDS" id="CCDS34399.1"/>
<dbReference type="RefSeq" id="NP_067007.3">
    <property type="nucleotide sequence ID" value="NM_021184.4"/>
</dbReference>
<dbReference type="BioGRID" id="121786">
    <property type="interactions" value="86"/>
</dbReference>
<dbReference type="FunCoup" id="O95873">
    <property type="interactions" value="52"/>
</dbReference>
<dbReference type="IntAct" id="O95873">
    <property type="interactions" value="18"/>
</dbReference>
<dbReference type="STRING" id="9606.ENSP00000365076"/>
<dbReference type="iPTMnet" id="O95873"/>
<dbReference type="PhosphoSitePlus" id="O95873"/>
<dbReference type="BioMuta" id="C6orf47"/>
<dbReference type="jPOST" id="O95873"/>
<dbReference type="MassIVE" id="O95873"/>
<dbReference type="PaxDb" id="9606-ENSP00000365076"/>
<dbReference type="PeptideAtlas" id="O95873"/>
<dbReference type="ProteomicsDB" id="51113"/>
<dbReference type="Pumba" id="O95873"/>
<dbReference type="Antibodypedia" id="49928">
    <property type="antibodies" value="16 antibodies from 8 providers"/>
</dbReference>
<dbReference type="DNASU" id="57827"/>
<dbReference type="Ensembl" id="ENST00000366431.2">
    <property type="protein sequence ID" value="ENSP00000375392.1"/>
    <property type="gene ID" value="ENSG00000235360.2"/>
</dbReference>
<dbReference type="Ensembl" id="ENST00000366432.2">
    <property type="protein sequence ID" value="ENSP00000375400.1"/>
    <property type="gene ID" value="ENSG00000203623.4"/>
</dbReference>
<dbReference type="Ensembl" id="ENST00000375911.2">
    <property type="protein sequence ID" value="ENSP00000365076.1"/>
    <property type="gene ID" value="ENSG00000204439.4"/>
</dbReference>
<dbReference type="Ensembl" id="ENST00000413113.1">
    <property type="protein sequence ID" value="ENSP00000395128.1"/>
    <property type="gene ID" value="ENSG00000226103.2"/>
</dbReference>
<dbReference type="Ensembl" id="ENST00000418357.1">
    <property type="protein sequence ID" value="ENSP00000398221.1"/>
    <property type="gene ID" value="ENSG00000226531.2"/>
</dbReference>
<dbReference type="Ensembl" id="ENST00000431256.1">
    <property type="protein sequence ID" value="ENSP00000406870.1"/>
    <property type="gene ID" value="ENSG00000228435.2"/>
</dbReference>
<dbReference type="Ensembl" id="ENST00000442972.1">
    <property type="protein sequence ID" value="ENSP00000407188.1"/>
    <property type="gene ID" value="ENSG00000228177.2"/>
</dbReference>
<dbReference type="GeneID" id="57827"/>
<dbReference type="KEGG" id="hsa:57827"/>
<dbReference type="MANE-Select" id="ENST00000375911.2">
    <property type="protein sequence ID" value="ENSP00000365076.1"/>
    <property type="RefSeq nucleotide sequence ID" value="NM_021184.4"/>
    <property type="RefSeq protein sequence ID" value="NP_067007.3"/>
</dbReference>
<dbReference type="UCSC" id="uc003nvm.1">
    <property type="organism name" value="human"/>
</dbReference>
<dbReference type="AGR" id="HGNC:19076"/>
<dbReference type="CTD" id="57827"/>
<dbReference type="DisGeNET" id="57827"/>
<dbReference type="GeneCards" id="C6orf47"/>
<dbReference type="HGNC" id="HGNC:19076">
    <property type="gene designation" value="C6orf47"/>
</dbReference>
<dbReference type="HPA" id="ENSG00000204439">
    <property type="expression patterns" value="Low tissue specificity"/>
</dbReference>
<dbReference type="neXtProt" id="NX_O95873"/>
<dbReference type="OpenTargets" id="ENSG00000204439"/>
<dbReference type="PharmGKB" id="PA38785"/>
<dbReference type="VEuPathDB" id="HostDB:ENSG00000204439"/>
<dbReference type="eggNOG" id="ENOG502SNQC">
    <property type="taxonomic scope" value="Eukaryota"/>
</dbReference>
<dbReference type="GeneTree" id="ENSGT00390000009270"/>
<dbReference type="HOGENOM" id="CLU_081876_0_0_1"/>
<dbReference type="InParanoid" id="O95873"/>
<dbReference type="OMA" id="KWDKTVS"/>
<dbReference type="OrthoDB" id="9950360at2759"/>
<dbReference type="PAN-GO" id="O95873">
    <property type="GO annotations" value="0 GO annotations based on evolutionary models"/>
</dbReference>
<dbReference type="PhylomeDB" id="O95873"/>
<dbReference type="TreeFam" id="TF339331"/>
<dbReference type="PathwayCommons" id="O95873"/>
<dbReference type="SignaLink" id="O95873"/>
<dbReference type="BioGRID-ORCS" id="57827">
    <property type="hits" value="20 hits in 1127 CRISPR screens"/>
</dbReference>
<dbReference type="GenomeRNAi" id="57827"/>
<dbReference type="Pharos" id="O95873">
    <property type="development level" value="Tdark"/>
</dbReference>
<dbReference type="PRO" id="PR:O95873"/>
<dbReference type="Proteomes" id="UP000005640">
    <property type="component" value="Chromosome 6"/>
</dbReference>
<dbReference type="RNAct" id="O95873">
    <property type="molecule type" value="protein"/>
</dbReference>
<dbReference type="Bgee" id="ENSG00000204439">
    <property type="expression patterns" value="Expressed in granulocyte and 98 other cell types or tissues"/>
</dbReference>
<dbReference type="ExpressionAtlas" id="O95873">
    <property type="expression patterns" value="baseline and differential"/>
</dbReference>
<dbReference type="InterPro" id="IPR029073">
    <property type="entry name" value="DUF4661"/>
</dbReference>
<dbReference type="PANTHER" id="PTHR14307">
    <property type="entry name" value="C6ORF47 FAMILY MEMBER"/>
    <property type="match status" value="1"/>
</dbReference>
<dbReference type="PANTHER" id="PTHR14307:SF0">
    <property type="entry name" value="SI:CH73-25F10.6"/>
    <property type="match status" value="1"/>
</dbReference>
<dbReference type="Pfam" id="PF15576">
    <property type="entry name" value="DUF4661"/>
    <property type="match status" value="1"/>
</dbReference>
<gene>
    <name type="primary">C6orf47</name>
    <name type="synonym">G4</name>
</gene>
<name>CF047_HUMAN</name>
<comment type="interaction">
    <interactant intactId="EBI-719613">
        <id>O95873</id>
    </interactant>
    <interactant intactId="EBI-1050204">
        <id>Q5EB52</id>
        <label>MEST</label>
    </interactant>
    <organismsDiffer>false</organismsDiffer>
    <experiments>3</experiments>
</comment>
<comment type="interaction">
    <interactant intactId="EBI-719613">
        <id>O95873</id>
    </interactant>
    <interactant intactId="EBI-712367">
        <id>Q9UI14</id>
        <label>RABAC1</label>
    </interactant>
    <organismsDiffer>false</organismsDiffer>
    <experiments>3</experiments>
</comment>
<comment type="interaction">
    <interactant intactId="EBI-719613">
        <id>O95873</id>
    </interactant>
    <interactant intactId="EBI-9679163">
        <id>Q9Y6D0</id>
        <label>SELENOK</label>
    </interactant>
    <organismsDiffer>false</organismsDiffer>
    <experiments>3</experiments>
</comment>
<keyword id="KW-0597">Phosphoprotein</keyword>
<keyword id="KW-1267">Proteomics identification</keyword>
<keyword id="KW-1185">Reference proteome</keyword>
<protein>
    <recommendedName>
        <fullName>Uncharacterized protein C6orf47</fullName>
    </recommendedName>
    <alternativeName>
        <fullName>Protein G4</fullName>
    </alternativeName>
</protein>